<accession>A6T228</accession>
<gene>
    <name evidence="1" type="primary">hemH</name>
    <name type="ordered locus">mma_2885</name>
</gene>
<keyword id="KW-0963">Cytoplasm</keyword>
<keyword id="KW-0350">Heme biosynthesis</keyword>
<keyword id="KW-0408">Iron</keyword>
<keyword id="KW-0456">Lyase</keyword>
<keyword id="KW-0479">Metal-binding</keyword>
<keyword id="KW-0627">Porphyrin biosynthesis</keyword>
<proteinExistence type="inferred from homology"/>
<name>HEMH_JANMA</name>
<feature type="chain" id="PRO_1000059482" description="Ferrochelatase">
    <location>
        <begin position="1"/>
        <end position="368"/>
    </location>
</feature>
<feature type="region of interest" description="Disordered" evidence="2">
    <location>
        <begin position="347"/>
        <end position="368"/>
    </location>
</feature>
<feature type="binding site" evidence="1">
    <location>
        <position position="209"/>
    </location>
    <ligand>
        <name>Fe cation</name>
        <dbReference type="ChEBI" id="CHEBI:24875"/>
    </ligand>
</feature>
<feature type="binding site" evidence="1">
    <location>
        <position position="290"/>
    </location>
    <ligand>
        <name>Fe cation</name>
        <dbReference type="ChEBI" id="CHEBI:24875"/>
    </ligand>
</feature>
<comment type="function">
    <text evidence="1">Catalyzes the ferrous insertion into protoporphyrin IX.</text>
</comment>
<comment type="catalytic activity">
    <reaction evidence="1">
        <text>heme b + 2 H(+) = protoporphyrin IX + Fe(2+)</text>
        <dbReference type="Rhea" id="RHEA:22584"/>
        <dbReference type="ChEBI" id="CHEBI:15378"/>
        <dbReference type="ChEBI" id="CHEBI:29033"/>
        <dbReference type="ChEBI" id="CHEBI:57306"/>
        <dbReference type="ChEBI" id="CHEBI:60344"/>
        <dbReference type="EC" id="4.98.1.1"/>
    </reaction>
</comment>
<comment type="pathway">
    <text evidence="1">Porphyrin-containing compound metabolism; protoheme biosynthesis; protoheme from protoporphyrin-IX: step 1/1.</text>
</comment>
<comment type="subcellular location">
    <subcellularLocation>
        <location evidence="1">Cytoplasm</location>
    </subcellularLocation>
</comment>
<comment type="similarity">
    <text evidence="1">Belongs to the ferrochelatase family.</text>
</comment>
<dbReference type="EC" id="4.98.1.1" evidence="1"/>
<dbReference type="EMBL" id="CP000269">
    <property type="protein sequence ID" value="ABR88803.1"/>
    <property type="molecule type" value="Genomic_DNA"/>
</dbReference>
<dbReference type="RefSeq" id="WP_012080734.1">
    <property type="nucleotide sequence ID" value="NC_009659.1"/>
</dbReference>
<dbReference type="SMR" id="A6T228"/>
<dbReference type="STRING" id="375286.mma_2885"/>
<dbReference type="KEGG" id="mms:mma_2885"/>
<dbReference type="eggNOG" id="COG0276">
    <property type="taxonomic scope" value="Bacteria"/>
</dbReference>
<dbReference type="HOGENOM" id="CLU_018884_0_0_4"/>
<dbReference type="OrthoDB" id="9809741at2"/>
<dbReference type="UniPathway" id="UPA00252">
    <property type="reaction ID" value="UER00325"/>
</dbReference>
<dbReference type="Proteomes" id="UP000006388">
    <property type="component" value="Chromosome"/>
</dbReference>
<dbReference type="GO" id="GO:0005737">
    <property type="term" value="C:cytoplasm"/>
    <property type="evidence" value="ECO:0007669"/>
    <property type="project" value="UniProtKB-SubCell"/>
</dbReference>
<dbReference type="GO" id="GO:0004325">
    <property type="term" value="F:ferrochelatase activity"/>
    <property type="evidence" value="ECO:0007669"/>
    <property type="project" value="UniProtKB-UniRule"/>
</dbReference>
<dbReference type="GO" id="GO:0046872">
    <property type="term" value="F:metal ion binding"/>
    <property type="evidence" value="ECO:0007669"/>
    <property type="project" value="UniProtKB-KW"/>
</dbReference>
<dbReference type="GO" id="GO:0006783">
    <property type="term" value="P:heme biosynthetic process"/>
    <property type="evidence" value="ECO:0007669"/>
    <property type="project" value="UniProtKB-UniRule"/>
</dbReference>
<dbReference type="CDD" id="cd00419">
    <property type="entry name" value="Ferrochelatase_C"/>
    <property type="match status" value="1"/>
</dbReference>
<dbReference type="CDD" id="cd03411">
    <property type="entry name" value="Ferrochelatase_N"/>
    <property type="match status" value="1"/>
</dbReference>
<dbReference type="FunFam" id="3.40.50.1400:FF:000002">
    <property type="entry name" value="Ferrochelatase"/>
    <property type="match status" value="1"/>
</dbReference>
<dbReference type="Gene3D" id="3.40.50.1400">
    <property type="match status" value="2"/>
</dbReference>
<dbReference type="HAMAP" id="MF_00323">
    <property type="entry name" value="Ferrochelatase"/>
    <property type="match status" value="1"/>
</dbReference>
<dbReference type="InterPro" id="IPR001015">
    <property type="entry name" value="Ferrochelatase"/>
</dbReference>
<dbReference type="InterPro" id="IPR019772">
    <property type="entry name" value="Ferrochelatase_AS"/>
</dbReference>
<dbReference type="InterPro" id="IPR033644">
    <property type="entry name" value="Ferrochelatase_C"/>
</dbReference>
<dbReference type="InterPro" id="IPR033659">
    <property type="entry name" value="Ferrochelatase_N"/>
</dbReference>
<dbReference type="NCBIfam" id="TIGR00109">
    <property type="entry name" value="hemH"/>
    <property type="match status" value="1"/>
</dbReference>
<dbReference type="PANTHER" id="PTHR11108">
    <property type="entry name" value="FERROCHELATASE"/>
    <property type="match status" value="1"/>
</dbReference>
<dbReference type="PANTHER" id="PTHR11108:SF1">
    <property type="entry name" value="FERROCHELATASE, MITOCHONDRIAL"/>
    <property type="match status" value="1"/>
</dbReference>
<dbReference type="Pfam" id="PF00762">
    <property type="entry name" value="Ferrochelatase"/>
    <property type="match status" value="1"/>
</dbReference>
<dbReference type="SUPFAM" id="SSF53800">
    <property type="entry name" value="Chelatase"/>
    <property type="match status" value="1"/>
</dbReference>
<dbReference type="PROSITE" id="PS00534">
    <property type="entry name" value="FERROCHELATASE"/>
    <property type="match status" value="1"/>
</dbReference>
<organism>
    <name type="scientific">Janthinobacterium sp. (strain Marseille)</name>
    <name type="common">Minibacterium massiliensis</name>
    <dbReference type="NCBI Taxonomy" id="375286"/>
    <lineage>
        <taxon>Bacteria</taxon>
        <taxon>Pseudomonadati</taxon>
        <taxon>Pseudomonadota</taxon>
        <taxon>Betaproteobacteria</taxon>
        <taxon>Burkholderiales</taxon>
        <taxon>Oxalobacteraceae</taxon>
        <taxon>Janthinobacterium</taxon>
    </lineage>
</organism>
<evidence type="ECO:0000255" key="1">
    <source>
        <dbReference type="HAMAP-Rule" id="MF_00323"/>
    </source>
</evidence>
<evidence type="ECO:0000256" key="2">
    <source>
        <dbReference type="SAM" id="MobiDB-lite"/>
    </source>
</evidence>
<protein>
    <recommendedName>
        <fullName evidence="1">Ferrochelatase</fullName>
        <ecNumber evidence="1">4.98.1.1</ecNumber>
    </recommendedName>
    <alternativeName>
        <fullName evidence="1">Heme synthase</fullName>
    </alternativeName>
    <alternativeName>
        <fullName evidence="1">Protoheme ferro-lyase</fullName>
    </alternativeName>
</protein>
<reference key="1">
    <citation type="journal article" date="2007" name="PLoS Genet.">
        <title>Genome analysis of Minibacterium massiliensis highlights the convergent evolution of water-living bacteria.</title>
        <authorList>
            <person name="Audic S."/>
            <person name="Robert C."/>
            <person name="Campagna B."/>
            <person name="Parinello H."/>
            <person name="Claverie J.-M."/>
            <person name="Raoult D."/>
            <person name="Drancourt M."/>
        </authorList>
    </citation>
    <scope>NUCLEOTIDE SEQUENCE [LARGE SCALE GENOMIC DNA]</scope>
    <source>
        <strain>Marseille</strain>
    </source>
</reference>
<sequence length="368" mass="41935">MSFRTEPPYIHGSTPKTAVVLVNLGTPDAPTTSAVRRYLKQFLSDPRVVEIPRAIWWFILHLVILPFRSGQSAKKYASIWSNEGSPLKVHTEKQAKLLNGYLGERGHKVKVVYAMRYGQPALPDVLRQLKADGCERILFLPAYPQYSGTTTASIFDAVFSHYTQERNVPELRFIKHYHDHDAYIRALRKSVQAHWDMAGRPDKLVMSFHGVPKRTLTLGDPYHCECHKTARLLAKELELTQEQYMVTFQSRFGKAEWLQPYTAPTLQKLAKEGIGRVDVICPGFTSDCLETLEEIAMEARHDFMSAGGKDFNYIGCLNEDDAWIKAMAEITELHLIGWPTIVPPSLREEQEQQAHISREEARRLGADQ</sequence>